<organism>
    <name type="scientific">Bradyrhizobium sp. (strain ORS 278)</name>
    <dbReference type="NCBI Taxonomy" id="114615"/>
    <lineage>
        <taxon>Bacteria</taxon>
        <taxon>Pseudomonadati</taxon>
        <taxon>Pseudomonadota</taxon>
        <taxon>Alphaproteobacteria</taxon>
        <taxon>Hyphomicrobiales</taxon>
        <taxon>Nitrobacteraceae</taxon>
        <taxon>Bradyrhizobium</taxon>
    </lineage>
</organism>
<evidence type="ECO:0000255" key="1">
    <source>
        <dbReference type="HAMAP-Rule" id="MF_00658"/>
    </source>
</evidence>
<proteinExistence type="inferred from homology"/>
<gene>
    <name evidence="1" type="primary">rlmH</name>
    <name type="ordered locus">BRADO0427</name>
</gene>
<protein>
    <recommendedName>
        <fullName evidence="1">Ribosomal RNA large subunit methyltransferase H</fullName>
        <ecNumber evidence="1">2.1.1.177</ecNumber>
    </recommendedName>
    <alternativeName>
        <fullName evidence="1">23S rRNA (pseudouridine1915-N3)-methyltransferase</fullName>
    </alternativeName>
    <alternativeName>
        <fullName evidence="1">23S rRNA m3Psi1915 methyltransferase</fullName>
    </alternativeName>
    <alternativeName>
        <fullName evidence="1">rRNA (pseudouridine-N3-)-methyltransferase RlmH</fullName>
    </alternativeName>
</protein>
<name>RLMH_BRASO</name>
<comment type="function">
    <text evidence="1">Specifically methylates the pseudouridine at position 1915 (m3Psi1915) in 23S rRNA.</text>
</comment>
<comment type="catalytic activity">
    <reaction evidence="1">
        <text>pseudouridine(1915) in 23S rRNA + S-adenosyl-L-methionine = N(3)-methylpseudouridine(1915) in 23S rRNA + S-adenosyl-L-homocysteine + H(+)</text>
        <dbReference type="Rhea" id="RHEA:42752"/>
        <dbReference type="Rhea" id="RHEA-COMP:10221"/>
        <dbReference type="Rhea" id="RHEA-COMP:10222"/>
        <dbReference type="ChEBI" id="CHEBI:15378"/>
        <dbReference type="ChEBI" id="CHEBI:57856"/>
        <dbReference type="ChEBI" id="CHEBI:59789"/>
        <dbReference type="ChEBI" id="CHEBI:65314"/>
        <dbReference type="ChEBI" id="CHEBI:74486"/>
        <dbReference type="EC" id="2.1.1.177"/>
    </reaction>
</comment>
<comment type="subunit">
    <text evidence="1">Homodimer.</text>
</comment>
<comment type="subcellular location">
    <subcellularLocation>
        <location evidence="1">Cytoplasm</location>
    </subcellularLocation>
</comment>
<comment type="similarity">
    <text evidence="1">Belongs to the RNA methyltransferase RlmH family.</text>
</comment>
<keyword id="KW-0963">Cytoplasm</keyword>
<keyword id="KW-0489">Methyltransferase</keyword>
<keyword id="KW-1185">Reference proteome</keyword>
<keyword id="KW-0698">rRNA processing</keyword>
<keyword id="KW-0949">S-adenosyl-L-methionine</keyword>
<keyword id="KW-0808">Transferase</keyword>
<feature type="chain" id="PRO_0000366567" description="Ribosomal RNA large subunit methyltransferase H">
    <location>
        <begin position="1"/>
        <end position="162"/>
    </location>
</feature>
<feature type="binding site" evidence="1">
    <location>
        <position position="78"/>
    </location>
    <ligand>
        <name>S-adenosyl-L-methionine</name>
        <dbReference type="ChEBI" id="CHEBI:59789"/>
    </ligand>
</feature>
<feature type="binding site" evidence="1">
    <location>
        <position position="110"/>
    </location>
    <ligand>
        <name>S-adenosyl-L-methionine</name>
        <dbReference type="ChEBI" id="CHEBI:59789"/>
    </ligand>
</feature>
<sequence length="162" mass="17900">MHMRLVVIAIGRLKQGPERQLAERYRERFDDIGRKLGFRGLDIHEIPESRARDAATRMAEEAAAIAAAIPDNSMLVCLDERGHNIDSATFAGHIGRWRDEGVAATAFVIGGADGLSPELRRKAKLGVAFGAATWPHQIVRVLLLEQIYRTATILAGHPYHRA</sequence>
<reference key="1">
    <citation type="journal article" date="2007" name="Science">
        <title>Legumes symbioses: absence of nod genes in photosynthetic bradyrhizobia.</title>
        <authorList>
            <person name="Giraud E."/>
            <person name="Moulin L."/>
            <person name="Vallenet D."/>
            <person name="Barbe V."/>
            <person name="Cytryn E."/>
            <person name="Avarre J.-C."/>
            <person name="Jaubert M."/>
            <person name="Simon D."/>
            <person name="Cartieaux F."/>
            <person name="Prin Y."/>
            <person name="Bena G."/>
            <person name="Hannibal L."/>
            <person name="Fardoux J."/>
            <person name="Kojadinovic M."/>
            <person name="Vuillet L."/>
            <person name="Lajus A."/>
            <person name="Cruveiller S."/>
            <person name="Rouy Z."/>
            <person name="Mangenot S."/>
            <person name="Segurens B."/>
            <person name="Dossat C."/>
            <person name="Franck W.L."/>
            <person name="Chang W.-S."/>
            <person name="Saunders E."/>
            <person name="Bruce D."/>
            <person name="Richardson P."/>
            <person name="Normand P."/>
            <person name="Dreyfus B."/>
            <person name="Pignol D."/>
            <person name="Stacey G."/>
            <person name="Emerich D."/>
            <person name="Vermeglio A."/>
            <person name="Medigue C."/>
            <person name="Sadowsky M."/>
        </authorList>
    </citation>
    <scope>NUCLEOTIDE SEQUENCE [LARGE SCALE GENOMIC DNA]</scope>
    <source>
        <strain>ORS 278</strain>
    </source>
</reference>
<dbReference type="EC" id="2.1.1.177" evidence="1"/>
<dbReference type="EMBL" id="CU234118">
    <property type="protein sequence ID" value="CAL74374.1"/>
    <property type="molecule type" value="Genomic_DNA"/>
</dbReference>
<dbReference type="SMR" id="A4YKE8"/>
<dbReference type="STRING" id="114615.BRADO0427"/>
<dbReference type="KEGG" id="bra:BRADO0427"/>
<dbReference type="eggNOG" id="COG1576">
    <property type="taxonomic scope" value="Bacteria"/>
</dbReference>
<dbReference type="HOGENOM" id="CLU_100552_1_1_5"/>
<dbReference type="Proteomes" id="UP000001994">
    <property type="component" value="Chromosome"/>
</dbReference>
<dbReference type="GO" id="GO:0005737">
    <property type="term" value="C:cytoplasm"/>
    <property type="evidence" value="ECO:0007669"/>
    <property type="project" value="UniProtKB-SubCell"/>
</dbReference>
<dbReference type="GO" id="GO:0070038">
    <property type="term" value="F:rRNA (pseudouridine-N3-)-methyltransferase activity"/>
    <property type="evidence" value="ECO:0007669"/>
    <property type="project" value="UniProtKB-UniRule"/>
</dbReference>
<dbReference type="CDD" id="cd18081">
    <property type="entry name" value="RlmH-like"/>
    <property type="match status" value="1"/>
</dbReference>
<dbReference type="Gene3D" id="3.40.1280.10">
    <property type="match status" value="1"/>
</dbReference>
<dbReference type="HAMAP" id="MF_00658">
    <property type="entry name" value="23SrRNA_methyltr_H"/>
    <property type="match status" value="1"/>
</dbReference>
<dbReference type="InterPro" id="IPR029028">
    <property type="entry name" value="Alpha/beta_knot_MTases"/>
</dbReference>
<dbReference type="InterPro" id="IPR003742">
    <property type="entry name" value="RlmH-like"/>
</dbReference>
<dbReference type="InterPro" id="IPR029026">
    <property type="entry name" value="tRNA_m1G_MTases_N"/>
</dbReference>
<dbReference type="NCBIfam" id="NF000989">
    <property type="entry name" value="PRK00103.2-3"/>
    <property type="match status" value="1"/>
</dbReference>
<dbReference type="NCBIfam" id="NF000991">
    <property type="entry name" value="PRK00103.2-5"/>
    <property type="match status" value="1"/>
</dbReference>
<dbReference type="PANTHER" id="PTHR33603">
    <property type="entry name" value="METHYLTRANSFERASE"/>
    <property type="match status" value="1"/>
</dbReference>
<dbReference type="PANTHER" id="PTHR33603:SF1">
    <property type="entry name" value="RIBOSOMAL RNA LARGE SUBUNIT METHYLTRANSFERASE H"/>
    <property type="match status" value="1"/>
</dbReference>
<dbReference type="Pfam" id="PF02590">
    <property type="entry name" value="SPOUT_MTase"/>
    <property type="match status" value="1"/>
</dbReference>
<dbReference type="PIRSF" id="PIRSF004505">
    <property type="entry name" value="MT_bac"/>
    <property type="match status" value="1"/>
</dbReference>
<dbReference type="SUPFAM" id="SSF75217">
    <property type="entry name" value="alpha/beta knot"/>
    <property type="match status" value="1"/>
</dbReference>
<accession>A4YKE8</accession>